<organism>
    <name type="scientific">Mus musculus</name>
    <name type="common">Mouse</name>
    <dbReference type="NCBI Taxonomy" id="10090"/>
    <lineage>
        <taxon>Eukaryota</taxon>
        <taxon>Metazoa</taxon>
        <taxon>Chordata</taxon>
        <taxon>Craniata</taxon>
        <taxon>Vertebrata</taxon>
        <taxon>Euteleostomi</taxon>
        <taxon>Mammalia</taxon>
        <taxon>Eutheria</taxon>
        <taxon>Euarchontoglires</taxon>
        <taxon>Glires</taxon>
        <taxon>Rodentia</taxon>
        <taxon>Myomorpha</taxon>
        <taxon>Muroidea</taxon>
        <taxon>Muridae</taxon>
        <taxon>Murinae</taxon>
        <taxon>Mus</taxon>
        <taxon>Mus</taxon>
    </lineage>
</organism>
<sequence>MENQLTKSVEERTFQYQDSLPSLPVPALEESLKKYLESVKPFANEDEYKKTEEIVQKFQEGAGKRLHQKLLERARGKRNWLEEWWLNVAYLDVRIPSQLNVNFVGPCPHFEHYWPAREGTQLERGSMMLWHNLNYWQLLRREKLPVHKSGNTPLDMNQFRMLFSTCKVPGITRDSIMNYFKTESEGHCPTHIAVLCRGRAFVFDVLHEGCLITPPELLRQLTYIHKKCSNEPVGPSIAALTSEERTRWAKAREYLISLDPENLTLLEKIQTSLFVYSIEDSSPHATPEEYSQVFEMLLGGDPSVRWGDKSYNLISFANGIFGCCCDHAPYDAMVMVNIAHYVDERVLETEGRWKGSEKVRDIPLPEELVFTVDEKILNDVSQAKAQHLKAASDLQIAASTFTSFGKKLTKEEALHPDTFIQLALQLAYYRLHGRPGCCYETAMTRYFYHGRTETVRSCTVEAVRWCQSMQDPSASLLERQQKMLEAFAKHNKMMKDCSHGKGFDRHLLGLLLIAKEEGLPVPELFEDPLFSRSGGGGNFVLSTSLVGYLRVQGVVVPMVHNGYGFFYHIRDDRFVVACSSWRSCPETDAEKLVQMIFHAFHDMIQLMNTAHL</sequence>
<keyword id="KW-0002">3D-structure</keyword>
<keyword id="KW-0007">Acetylation</keyword>
<keyword id="KW-0012">Acyltransferase</keyword>
<keyword id="KW-0276">Fatty acid metabolism</keyword>
<keyword id="KW-0443">Lipid metabolism</keyword>
<keyword id="KW-0576">Peroxisome</keyword>
<keyword id="KW-1185">Reference proteome</keyword>
<keyword id="KW-0808">Transferase</keyword>
<keyword id="KW-0813">Transport</keyword>
<accession>Q9DC50</accession>
<accession>Q921I4</accession>
<comment type="function">
    <text evidence="4">Beta-oxidation of fatty acids. The highest activity concerns the C6 to C10 chain length substrate.</text>
</comment>
<comment type="catalytic activity">
    <reaction evidence="4">
        <text>octanoyl-CoA + (R)-carnitine = O-octanoyl-(R)-carnitine + CoA</text>
        <dbReference type="Rhea" id="RHEA:17177"/>
        <dbReference type="ChEBI" id="CHEBI:16347"/>
        <dbReference type="ChEBI" id="CHEBI:18102"/>
        <dbReference type="ChEBI" id="CHEBI:57287"/>
        <dbReference type="ChEBI" id="CHEBI:57386"/>
        <dbReference type="EC" id="2.3.1.137"/>
    </reaction>
</comment>
<comment type="catalytic activity">
    <reaction evidence="2">
        <text>4,8-dimethylnonanoyl-CoA + (R)-carnitine = O-4,8-dimethylnonanoyl-(R)-carnitine + CoA</text>
        <dbReference type="Rhea" id="RHEA:44860"/>
        <dbReference type="ChEBI" id="CHEBI:16347"/>
        <dbReference type="ChEBI" id="CHEBI:57287"/>
        <dbReference type="ChEBI" id="CHEBI:77061"/>
        <dbReference type="ChEBI" id="CHEBI:84654"/>
    </reaction>
</comment>
<comment type="pathway">
    <text>Lipid metabolism; fatty acid beta-oxidation.</text>
</comment>
<comment type="subcellular location">
    <subcellularLocation>
        <location evidence="5">Peroxisome</location>
    </subcellularLocation>
</comment>
<comment type="similarity">
    <text evidence="5">Belongs to the carnitine/choline acetyltransferase family.</text>
</comment>
<dbReference type="EC" id="2.3.1.137" evidence="4"/>
<dbReference type="EMBL" id="AK004567">
    <property type="protein sequence ID" value="BAB23378.1"/>
    <property type="molecule type" value="mRNA"/>
</dbReference>
<dbReference type="EMBL" id="BC006593">
    <property type="protein sequence ID" value="AAH06593.1"/>
    <property type="molecule type" value="mRNA"/>
</dbReference>
<dbReference type="EMBL" id="BC012308">
    <property type="protein sequence ID" value="AAH12308.1"/>
    <property type="molecule type" value="mRNA"/>
</dbReference>
<dbReference type="CCDS" id="CCDS19087.1"/>
<dbReference type="RefSeq" id="NP_001404759.1">
    <property type="nucleotide sequence ID" value="NM_001417830.1"/>
</dbReference>
<dbReference type="RefSeq" id="NP_001404760.1">
    <property type="nucleotide sequence ID" value="NM_001417831.1"/>
</dbReference>
<dbReference type="RefSeq" id="NP_001404761.1">
    <property type="nucleotide sequence ID" value="NM_001417832.1"/>
</dbReference>
<dbReference type="RefSeq" id="NP_076222.1">
    <property type="nucleotide sequence ID" value="NM_023733.3"/>
</dbReference>
<dbReference type="PDB" id="1XL7">
    <property type="method" value="X-ray"/>
    <property type="resolution" value="2.00 A"/>
    <property type="chains" value="A/B=1-612"/>
</dbReference>
<dbReference type="PDB" id="1XL8">
    <property type="method" value="X-ray"/>
    <property type="resolution" value="2.20 A"/>
    <property type="chains" value="A/B=1-612"/>
</dbReference>
<dbReference type="PDB" id="1XMC">
    <property type="method" value="X-ray"/>
    <property type="resolution" value="2.00 A"/>
    <property type="chains" value="A/B=1-612"/>
</dbReference>
<dbReference type="PDB" id="1XMD">
    <property type="method" value="X-ray"/>
    <property type="resolution" value="2.10 A"/>
    <property type="chains" value="A/B=1-612"/>
</dbReference>
<dbReference type="PDBsum" id="1XL7"/>
<dbReference type="PDBsum" id="1XL8"/>
<dbReference type="PDBsum" id="1XMC"/>
<dbReference type="PDBsum" id="1XMD"/>
<dbReference type="SMR" id="Q9DC50"/>
<dbReference type="BioGRID" id="216502">
    <property type="interactions" value="1"/>
</dbReference>
<dbReference type="FunCoup" id="Q9DC50">
    <property type="interactions" value="2377"/>
</dbReference>
<dbReference type="STRING" id="10090.ENSMUSP00000003720"/>
<dbReference type="GlyGen" id="Q9DC50">
    <property type="glycosylation" value="1 site, 1 O-linked glycan (1 site)"/>
</dbReference>
<dbReference type="iPTMnet" id="Q9DC50"/>
<dbReference type="PhosphoSitePlus" id="Q9DC50"/>
<dbReference type="SwissPalm" id="Q9DC50"/>
<dbReference type="jPOST" id="Q9DC50"/>
<dbReference type="PaxDb" id="10090-ENSMUSP00000003720"/>
<dbReference type="PeptideAtlas" id="Q9DC50"/>
<dbReference type="ProteomicsDB" id="293830"/>
<dbReference type="Pumba" id="Q9DC50"/>
<dbReference type="Antibodypedia" id="15286">
    <property type="antibodies" value="330 antibodies from 33 providers"/>
</dbReference>
<dbReference type="DNASU" id="74114"/>
<dbReference type="Ensembl" id="ENSMUST00000003720.5">
    <property type="protein sequence ID" value="ENSMUSP00000003720.5"/>
    <property type="gene ID" value="ENSMUSG00000003623.5"/>
</dbReference>
<dbReference type="GeneID" id="74114"/>
<dbReference type="KEGG" id="mmu:74114"/>
<dbReference type="UCSC" id="uc008wkt.1">
    <property type="organism name" value="mouse"/>
</dbReference>
<dbReference type="AGR" id="MGI:1921364"/>
<dbReference type="CTD" id="54677"/>
<dbReference type="MGI" id="MGI:1921364">
    <property type="gene designation" value="Crot"/>
</dbReference>
<dbReference type="VEuPathDB" id="HostDB:ENSMUSG00000003623"/>
<dbReference type="eggNOG" id="KOG3718">
    <property type="taxonomic scope" value="Eukaryota"/>
</dbReference>
<dbReference type="GeneTree" id="ENSGT01130000278297"/>
<dbReference type="HOGENOM" id="CLU_013513_5_3_1"/>
<dbReference type="InParanoid" id="Q9DC50"/>
<dbReference type="OMA" id="DVWAKDY"/>
<dbReference type="OrthoDB" id="240216at2759"/>
<dbReference type="PhylomeDB" id="Q9DC50"/>
<dbReference type="TreeFam" id="TF313836"/>
<dbReference type="BRENDA" id="2.3.1.137">
    <property type="organism ID" value="3474"/>
</dbReference>
<dbReference type="Reactome" id="R-MMU-389887">
    <property type="pathway name" value="Beta-oxidation of pristanoyl-CoA"/>
</dbReference>
<dbReference type="Reactome" id="R-MMU-9033241">
    <property type="pathway name" value="Peroxisomal protein import"/>
</dbReference>
<dbReference type="UniPathway" id="UPA00659"/>
<dbReference type="BioGRID-ORCS" id="74114">
    <property type="hits" value="2 hits in 78 CRISPR screens"/>
</dbReference>
<dbReference type="ChiTaRS" id="Crot">
    <property type="organism name" value="mouse"/>
</dbReference>
<dbReference type="EvolutionaryTrace" id="Q9DC50"/>
<dbReference type="PRO" id="PR:Q9DC50"/>
<dbReference type="Proteomes" id="UP000000589">
    <property type="component" value="Chromosome 5"/>
</dbReference>
<dbReference type="RNAct" id="Q9DC50">
    <property type="molecule type" value="protein"/>
</dbReference>
<dbReference type="Bgee" id="ENSMUSG00000003623">
    <property type="expression patterns" value="Expressed in left lobe of liver and 254 other cell types or tissues"/>
</dbReference>
<dbReference type="GO" id="GO:0005739">
    <property type="term" value="C:mitochondrion"/>
    <property type="evidence" value="ECO:0007005"/>
    <property type="project" value="MGI"/>
</dbReference>
<dbReference type="GO" id="GO:0005777">
    <property type="term" value="C:peroxisome"/>
    <property type="evidence" value="ECO:0000314"/>
    <property type="project" value="MGI"/>
</dbReference>
<dbReference type="GO" id="GO:0008458">
    <property type="term" value="F:carnitine O-octanoyltransferase activity"/>
    <property type="evidence" value="ECO:0000314"/>
    <property type="project" value="UniProtKB"/>
</dbReference>
<dbReference type="GO" id="GO:0009437">
    <property type="term" value="P:carnitine metabolic process"/>
    <property type="evidence" value="ECO:0000314"/>
    <property type="project" value="UniProtKB"/>
</dbReference>
<dbReference type="GO" id="GO:0015936">
    <property type="term" value="P:coenzyme A metabolic process"/>
    <property type="evidence" value="ECO:0000314"/>
    <property type="project" value="UniProtKB"/>
</dbReference>
<dbReference type="GO" id="GO:0006635">
    <property type="term" value="P:fatty acid beta-oxidation"/>
    <property type="evidence" value="ECO:0007669"/>
    <property type="project" value="UniProtKB-UniPathway"/>
</dbReference>
<dbReference type="GO" id="GO:0006631">
    <property type="term" value="P:fatty acid metabolic process"/>
    <property type="evidence" value="ECO:0000314"/>
    <property type="project" value="UniProtKB"/>
</dbReference>
<dbReference type="GO" id="GO:0015908">
    <property type="term" value="P:fatty acid transport"/>
    <property type="evidence" value="ECO:0000314"/>
    <property type="project" value="MGI"/>
</dbReference>
<dbReference type="GO" id="GO:0006091">
    <property type="term" value="P:generation of precursor metabolites and energy"/>
    <property type="evidence" value="ECO:0007669"/>
    <property type="project" value="Ensembl"/>
</dbReference>
<dbReference type="GO" id="GO:0051791">
    <property type="term" value="P:medium-chain fatty acid metabolic process"/>
    <property type="evidence" value="ECO:0007669"/>
    <property type="project" value="Ensembl"/>
</dbReference>
<dbReference type="FunFam" id="3.30.559.70:FF:000006">
    <property type="entry name" value="Peroxisomal carnitine O-octanoyltransferase"/>
    <property type="match status" value="1"/>
</dbReference>
<dbReference type="Gene3D" id="3.30.559.10">
    <property type="entry name" value="Chloramphenicol acetyltransferase-like domain"/>
    <property type="match status" value="1"/>
</dbReference>
<dbReference type="Gene3D" id="1.10.275.20">
    <property type="entry name" value="Choline/Carnitine o-acyltransferase"/>
    <property type="match status" value="1"/>
</dbReference>
<dbReference type="Gene3D" id="3.30.559.70">
    <property type="entry name" value="Choline/Carnitine o-acyltransferase, domain 2"/>
    <property type="match status" value="1"/>
</dbReference>
<dbReference type="InterPro" id="IPR000542">
    <property type="entry name" value="Carn_acyl_trans"/>
</dbReference>
<dbReference type="InterPro" id="IPR042572">
    <property type="entry name" value="Carn_acyl_trans_N"/>
</dbReference>
<dbReference type="InterPro" id="IPR023213">
    <property type="entry name" value="CAT-like_dom_sf"/>
</dbReference>
<dbReference type="InterPro" id="IPR039551">
    <property type="entry name" value="Cho/carn_acyl_trans"/>
</dbReference>
<dbReference type="InterPro" id="IPR042231">
    <property type="entry name" value="Cho/carn_acyl_trans_2"/>
</dbReference>
<dbReference type="PANTHER" id="PTHR22589">
    <property type="entry name" value="CARNITINE O-ACYLTRANSFERASE"/>
    <property type="match status" value="1"/>
</dbReference>
<dbReference type="PANTHER" id="PTHR22589:SF67">
    <property type="entry name" value="PEROXISOMAL CARNITINE O-OCTANOYLTRANSFERASE"/>
    <property type="match status" value="1"/>
</dbReference>
<dbReference type="Pfam" id="PF00755">
    <property type="entry name" value="Carn_acyltransf"/>
    <property type="match status" value="1"/>
</dbReference>
<dbReference type="SUPFAM" id="SSF52777">
    <property type="entry name" value="CoA-dependent acyltransferases"/>
    <property type="match status" value="2"/>
</dbReference>
<dbReference type="PROSITE" id="PS00439">
    <property type="entry name" value="ACYLTRANSF_C_1"/>
    <property type="match status" value="1"/>
</dbReference>
<dbReference type="PROSITE" id="PS00440">
    <property type="entry name" value="ACYLTRANSF_C_2"/>
    <property type="match status" value="1"/>
</dbReference>
<reference key="1">
    <citation type="journal article" date="2005" name="Science">
        <title>The transcriptional landscape of the mammalian genome.</title>
        <authorList>
            <person name="Carninci P."/>
            <person name="Kasukawa T."/>
            <person name="Katayama S."/>
            <person name="Gough J."/>
            <person name="Frith M.C."/>
            <person name="Maeda N."/>
            <person name="Oyama R."/>
            <person name="Ravasi T."/>
            <person name="Lenhard B."/>
            <person name="Wells C."/>
            <person name="Kodzius R."/>
            <person name="Shimokawa K."/>
            <person name="Bajic V.B."/>
            <person name="Brenner S.E."/>
            <person name="Batalov S."/>
            <person name="Forrest A.R."/>
            <person name="Zavolan M."/>
            <person name="Davis M.J."/>
            <person name="Wilming L.G."/>
            <person name="Aidinis V."/>
            <person name="Allen J.E."/>
            <person name="Ambesi-Impiombato A."/>
            <person name="Apweiler R."/>
            <person name="Aturaliya R.N."/>
            <person name="Bailey T.L."/>
            <person name="Bansal M."/>
            <person name="Baxter L."/>
            <person name="Beisel K.W."/>
            <person name="Bersano T."/>
            <person name="Bono H."/>
            <person name="Chalk A.M."/>
            <person name="Chiu K.P."/>
            <person name="Choudhary V."/>
            <person name="Christoffels A."/>
            <person name="Clutterbuck D.R."/>
            <person name="Crowe M.L."/>
            <person name="Dalla E."/>
            <person name="Dalrymple B.P."/>
            <person name="de Bono B."/>
            <person name="Della Gatta G."/>
            <person name="di Bernardo D."/>
            <person name="Down T."/>
            <person name="Engstrom P."/>
            <person name="Fagiolini M."/>
            <person name="Faulkner G."/>
            <person name="Fletcher C.F."/>
            <person name="Fukushima T."/>
            <person name="Furuno M."/>
            <person name="Futaki S."/>
            <person name="Gariboldi M."/>
            <person name="Georgii-Hemming P."/>
            <person name="Gingeras T.R."/>
            <person name="Gojobori T."/>
            <person name="Green R.E."/>
            <person name="Gustincich S."/>
            <person name="Harbers M."/>
            <person name="Hayashi Y."/>
            <person name="Hensch T.K."/>
            <person name="Hirokawa N."/>
            <person name="Hill D."/>
            <person name="Huminiecki L."/>
            <person name="Iacono M."/>
            <person name="Ikeo K."/>
            <person name="Iwama A."/>
            <person name="Ishikawa T."/>
            <person name="Jakt M."/>
            <person name="Kanapin A."/>
            <person name="Katoh M."/>
            <person name="Kawasawa Y."/>
            <person name="Kelso J."/>
            <person name="Kitamura H."/>
            <person name="Kitano H."/>
            <person name="Kollias G."/>
            <person name="Krishnan S.P."/>
            <person name="Kruger A."/>
            <person name="Kummerfeld S.K."/>
            <person name="Kurochkin I.V."/>
            <person name="Lareau L.F."/>
            <person name="Lazarevic D."/>
            <person name="Lipovich L."/>
            <person name="Liu J."/>
            <person name="Liuni S."/>
            <person name="McWilliam S."/>
            <person name="Madan Babu M."/>
            <person name="Madera M."/>
            <person name="Marchionni L."/>
            <person name="Matsuda H."/>
            <person name="Matsuzawa S."/>
            <person name="Miki H."/>
            <person name="Mignone F."/>
            <person name="Miyake S."/>
            <person name="Morris K."/>
            <person name="Mottagui-Tabar S."/>
            <person name="Mulder N."/>
            <person name="Nakano N."/>
            <person name="Nakauchi H."/>
            <person name="Ng P."/>
            <person name="Nilsson R."/>
            <person name="Nishiguchi S."/>
            <person name="Nishikawa S."/>
            <person name="Nori F."/>
            <person name="Ohara O."/>
            <person name="Okazaki Y."/>
            <person name="Orlando V."/>
            <person name="Pang K.C."/>
            <person name="Pavan W.J."/>
            <person name="Pavesi G."/>
            <person name="Pesole G."/>
            <person name="Petrovsky N."/>
            <person name="Piazza S."/>
            <person name="Reed J."/>
            <person name="Reid J.F."/>
            <person name="Ring B.Z."/>
            <person name="Ringwald M."/>
            <person name="Rost B."/>
            <person name="Ruan Y."/>
            <person name="Salzberg S.L."/>
            <person name="Sandelin A."/>
            <person name="Schneider C."/>
            <person name="Schoenbach C."/>
            <person name="Sekiguchi K."/>
            <person name="Semple C.A."/>
            <person name="Seno S."/>
            <person name="Sessa L."/>
            <person name="Sheng Y."/>
            <person name="Shibata Y."/>
            <person name="Shimada H."/>
            <person name="Shimada K."/>
            <person name="Silva D."/>
            <person name="Sinclair B."/>
            <person name="Sperling S."/>
            <person name="Stupka E."/>
            <person name="Sugiura K."/>
            <person name="Sultana R."/>
            <person name="Takenaka Y."/>
            <person name="Taki K."/>
            <person name="Tammoja K."/>
            <person name="Tan S.L."/>
            <person name="Tang S."/>
            <person name="Taylor M.S."/>
            <person name="Tegner J."/>
            <person name="Teichmann S.A."/>
            <person name="Ueda H.R."/>
            <person name="van Nimwegen E."/>
            <person name="Verardo R."/>
            <person name="Wei C.L."/>
            <person name="Yagi K."/>
            <person name="Yamanishi H."/>
            <person name="Zabarovsky E."/>
            <person name="Zhu S."/>
            <person name="Zimmer A."/>
            <person name="Hide W."/>
            <person name="Bult C."/>
            <person name="Grimmond S.M."/>
            <person name="Teasdale R.D."/>
            <person name="Liu E.T."/>
            <person name="Brusic V."/>
            <person name="Quackenbush J."/>
            <person name="Wahlestedt C."/>
            <person name="Mattick J.S."/>
            <person name="Hume D.A."/>
            <person name="Kai C."/>
            <person name="Sasaki D."/>
            <person name="Tomaru Y."/>
            <person name="Fukuda S."/>
            <person name="Kanamori-Katayama M."/>
            <person name="Suzuki M."/>
            <person name="Aoki J."/>
            <person name="Arakawa T."/>
            <person name="Iida J."/>
            <person name="Imamura K."/>
            <person name="Itoh M."/>
            <person name="Kato T."/>
            <person name="Kawaji H."/>
            <person name="Kawagashira N."/>
            <person name="Kawashima T."/>
            <person name="Kojima M."/>
            <person name="Kondo S."/>
            <person name="Konno H."/>
            <person name="Nakano K."/>
            <person name="Ninomiya N."/>
            <person name="Nishio T."/>
            <person name="Okada M."/>
            <person name="Plessy C."/>
            <person name="Shibata K."/>
            <person name="Shiraki T."/>
            <person name="Suzuki S."/>
            <person name="Tagami M."/>
            <person name="Waki K."/>
            <person name="Watahiki A."/>
            <person name="Okamura-Oho Y."/>
            <person name="Suzuki H."/>
            <person name="Kawai J."/>
            <person name="Hayashizaki Y."/>
        </authorList>
    </citation>
    <scope>NUCLEOTIDE SEQUENCE [LARGE SCALE MRNA]</scope>
    <source>
        <strain>C57BL/6J</strain>
        <tissue>Lung</tissue>
    </source>
</reference>
<reference key="2">
    <citation type="journal article" date="2004" name="Genome Res.">
        <title>The status, quality, and expansion of the NIH full-length cDNA project: the Mammalian Gene Collection (MGC).</title>
        <authorList>
            <consortium name="The MGC Project Team"/>
        </authorList>
    </citation>
    <scope>NUCLEOTIDE SEQUENCE [LARGE SCALE MRNA]</scope>
</reference>
<reference key="3">
    <citation type="journal article" date="2010" name="Cell">
        <title>A tissue-specific atlas of mouse protein phosphorylation and expression.</title>
        <authorList>
            <person name="Huttlin E.L."/>
            <person name="Jedrychowski M.P."/>
            <person name="Elias J.E."/>
            <person name="Goswami T."/>
            <person name="Rad R."/>
            <person name="Beausoleil S.A."/>
            <person name="Villen J."/>
            <person name="Haas W."/>
            <person name="Sowa M.E."/>
            <person name="Gygi S.P."/>
        </authorList>
    </citation>
    <scope>IDENTIFICATION BY MASS SPECTROMETRY [LARGE SCALE ANALYSIS]</scope>
    <source>
        <tissue>Brain</tissue>
        <tissue>Heart</tissue>
        <tissue>Kidney</tissue>
        <tissue>Liver</tissue>
        <tissue>Pancreas</tissue>
        <tissue>Spleen</tissue>
        <tissue>Testis</tissue>
    </source>
</reference>
<reference key="4">
    <citation type="journal article" date="2013" name="Mol. Cell">
        <title>SIRT5-mediated lysine desuccinylation impacts diverse metabolic pathways.</title>
        <authorList>
            <person name="Park J."/>
            <person name="Chen Y."/>
            <person name="Tishkoff D.X."/>
            <person name="Peng C."/>
            <person name="Tan M."/>
            <person name="Dai L."/>
            <person name="Xie Z."/>
            <person name="Zhang Y."/>
            <person name="Zwaans B.M."/>
            <person name="Skinner M.E."/>
            <person name="Lombard D.B."/>
            <person name="Zhao Y."/>
        </authorList>
    </citation>
    <scope>SUCCINYLATION [LARGE SCALE ANALYSIS] AT LYS-40; LYS-57 AND LYS-406</scope>
    <scope>IDENTIFICATION BY MASS SPECTROMETRY [LARGE SCALE ANALYSIS]</scope>
    <source>
        <tissue>Liver</tissue>
    </source>
</reference>
<reference key="5">
    <citation type="journal article" date="2013" name="Proc. Natl. Acad. Sci. U.S.A.">
        <title>Label-free quantitative proteomics of the lysine acetylome in mitochondria identifies substrates of SIRT3 in metabolic pathways.</title>
        <authorList>
            <person name="Rardin M.J."/>
            <person name="Newman J.C."/>
            <person name="Held J.M."/>
            <person name="Cusack M.P."/>
            <person name="Sorensen D.J."/>
            <person name="Li B."/>
            <person name="Schilling B."/>
            <person name="Mooney S.D."/>
            <person name="Kahn C.R."/>
            <person name="Verdin E."/>
            <person name="Gibson B.W."/>
        </authorList>
    </citation>
    <scope>ACETYLATION [LARGE SCALE ANALYSIS] AT LYS-406</scope>
    <scope>IDENTIFICATION BY MASS SPECTROMETRY [LARGE SCALE ANALYSIS]</scope>
    <source>
        <tissue>Liver</tissue>
    </source>
</reference>
<reference key="6">
    <citation type="journal article" date="2005" name="J. Biol. Chem.">
        <title>Crystal structure of mouse carnitine octanoyltransferase and molecular determinants of substrate selectivity.</title>
        <authorList>
            <person name="Jogl G."/>
            <person name="Hsiao Y.S."/>
            <person name="Tong L."/>
        </authorList>
    </citation>
    <scope>X-RAY CRYSTALLOGRAPHY (2.00 ANGSTROMS) IN COMPLEXES WITH CARNITINE AND OCTANOYLCARNITINE</scope>
    <scope>ACTIVE SITE</scope>
    <scope>CATALYTIC ACTIVITY</scope>
    <scope>FUNCTION</scope>
    <scope>MUTAGENESIS OF CYS-323; MET-335 AND GLY-553</scope>
</reference>
<proteinExistence type="evidence at protein level"/>
<protein>
    <recommendedName>
        <fullName>Peroxisomal carnitine O-octanoyltransferase</fullName>
        <shortName>COT</shortName>
        <ecNumber evidence="4">2.3.1.137</ecNumber>
    </recommendedName>
</protein>
<gene>
    <name type="primary">Crot</name>
    <name type="synonym">Cot</name>
</gene>
<evidence type="ECO:0000250" key="1"/>
<evidence type="ECO:0000250" key="2">
    <source>
        <dbReference type="UniProtKB" id="Q9UKG9"/>
    </source>
</evidence>
<evidence type="ECO:0000255" key="3"/>
<evidence type="ECO:0000269" key="4">
    <source>
    </source>
</evidence>
<evidence type="ECO:0000305" key="5"/>
<evidence type="ECO:0007744" key="6">
    <source>
    </source>
</evidence>
<evidence type="ECO:0007744" key="7">
    <source>
    </source>
</evidence>
<evidence type="ECO:0007829" key="8">
    <source>
        <dbReference type="PDB" id="1XL7"/>
    </source>
</evidence>
<evidence type="ECO:0007829" key="9">
    <source>
        <dbReference type="PDB" id="1XMC"/>
    </source>
</evidence>
<evidence type="ECO:0007829" key="10">
    <source>
        <dbReference type="PDB" id="1XMD"/>
    </source>
</evidence>
<name>OCTC_MOUSE</name>
<feature type="chain" id="PRO_0000210170" description="Peroxisomal carnitine O-octanoyltransferase">
    <location>
        <begin position="1"/>
        <end position="612"/>
    </location>
</feature>
<feature type="short sequence motif" description="Microbody targeting signal" evidence="3">
    <location>
        <begin position="610"/>
        <end position="612"/>
    </location>
</feature>
<feature type="active site" description="Proton acceptor" evidence="4">
    <location>
        <position position="327"/>
    </location>
</feature>
<feature type="binding site" evidence="1">
    <location>
        <position position="406"/>
    </location>
    <ligand>
        <name>CoA</name>
        <dbReference type="ChEBI" id="CHEBI:57287"/>
    </ligand>
</feature>
<feature type="binding site" evidence="1">
    <location>
        <begin position="410"/>
        <end position="417"/>
    </location>
    <ligand>
        <name>CoA</name>
        <dbReference type="ChEBI" id="CHEBI:57287"/>
    </ligand>
</feature>
<feature type="binding site">
    <location>
        <position position="439"/>
    </location>
    <ligand>
        <name>(R)-carnitine</name>
        <dbReference type="ChEBI" id="CHEBI:16347"/>
    </ligand>
</feature>
<feature type="binding site">
    <location>
        <position position="441"/>
    </location>
    <ligand>
        <name>(R)-carnitine</name>
        <dbReference type="ChEBI" id="CHEBI:16347"/>
    </ligand>
</feature>
<feature type="binding site">
    <location>
        <position position="452"/>
    </location>
    <ligand>
        <name>(R)-carnitine</name>
        <dbReference type="ChEBI" id="CHEBI:16347"/>
    </ligand>
</feature>
<feature type="modified residue" description="N-acetylmethionine" evidence="2">
    <location>
        <position position="1"/>
    </location>
</feature>
<feature type="modified residue" description="N6-succinyllysine" evidence="7">
    <location>
        <position position="40"/>
    </location>
</feature>
<feature type="modified residue" description="N6-succinyllysine" evidence="7">
    <location>
        <position position="57"/>
    </location>
</feature>
<feature type="modified residue" description="N6-acetyllysine; alternate" evidence="6">
    <location>
        <position position="406"/>
    </location>
</feature>
<feature type="modified residue" description="N6-succinyllysine; alternate" evidence="7">
    <location>
        <position position="406"/>
    </location>
</feature>
<feature type="mutagenesis site" description="Increases activity with octanoyl-CoA." evidence="4">
    <original>C</original>
    <variation>M</variation>
    <location>
        <position position="323"/>
    </location>
</feature>
<feature type="mutagenesis site" description="Slightly decreases activity with octanoyl-CoA." evidence="4">
    <original>M</original>
    <variation>A</variation>
    <location>
        <position position="335"/>
    </location>
</feature>
<feature type="mutagenesis site" description="Strongly decreases activity with octanoyl-CoA." evidence="4">
    <original>M</original>
    <variation>A</variation>
    <location>
        <position position="335"/>
    </location>
</feature>
<feature type="mutagenesis site" description="Loss of activity with octanoyl-CoA and myristoyl-CoA." evidence="4">
    <original>G</original>
    <variation>M</variation>
    <location>
        <position position="553"/>
    </location>
</feature>
<feature type="sequence conflict" description="In Ref. 2; AAH12308." evidence="5" ref="2">
    <original>T</original>
    <variation>A</variation>
    <location>
        <position position="459"/>
    </location>
</feature>
<feature type="turn" evidence="8">
    <location>
        <begin position="13"/>
        <end position="16"/>
    </location>
</feature>
<feature type="helix" evidence="8">
    <location>
        <begin position="17"/>
        <end position="19"/>
    </location>
</feature>
<feature type="helix" evidence="8">
    <location>
        <begin position="28"/>
        <end position="39"/>
    </location>
</feature>
<feature type="helix" evidence="8">
    <location>
        <begin position="40"/>
        <end position="42"/>
    </location>
</feature>
<feature type="helix" evidence="8">
    <location>
        <begin position="45"/>
        <end position="60"/>
    </location>
</feature>
<feature type="helix" evidence="8">
    <location>
        <begin position="62"/>
        <end position="76"/>
    </location>
</feature>
<feature type="strand" evidence="9">
    <location>
        <begin position="78"/>
        <end position="81"/>
    </location>
</feature>
<feature type="helix" evidence="8">
    <location>
        <begin position="82"/>
        <end position="89"/>
    </location>
</feature>
<feature type="helix" evidence="8">
    <location>
        <begin position="97"/>
        <end position="100"/>
    </location>
</feature>
<feature type="strand" evidence="8">
    <location>
        <begin position="103"/>
        <end position="106"/>
    </location>
</feature>
<feature type="helix" evidence="8">
    <location>
        <begin position="108"/>
        <end position="111"/>
    </location>
</feature>
<feature type="helix" evidence="8">
    <location>
        <begin position="121"/>
        <end position="140"/>
    </location>
</feature>
<feature type="helix" evidence="8">
    <location>
        <begin position="157"/>
        <end position="161"/>
    </location>
</feature>
<feature type="strand" evidence="8">
    <location>
        <begin position="162"/>
        <end position="168"/>
    </location>
</feature>
<feature type="strand" evidence="8">
    <location>
        <begin position="175"/>
        <end position="178"/>
    </location>
</feature>
<feature type="turn" evidence="8">
    <location>
        <begin position="183"/>
        <end position="185"/>
    </location>
</feature>
<feature type="strand" evidence="8">
    <location>
        <begin position="191"/>
        <end position="196"/>
    </location>
</feature>
<feature type="strand" evidence="8">
    <location>
        <begin position="199"/>
        <end position="207"/>
    </location>
</feature>
<feature type="helix" evidence="8">
    <location>
        <begin position="214"/>
        <end position="229"/>
    </location>
</feature>
<feature type="helix" evidence="8">
    <location>
        <begin position="237"/>
        <end position="242"/>
    </location>
</feature>
<feature type="helix" evidence="8">
    <location>
        <begin position="245"/>
        <end position="258"/>
    </location>
</feature>
<feature type="helix" evidence="8">
    <location>
        <begin position="260"/>
        <end position="271"/>
    </location>
</feature>
<feature type="strand" evidence="8">
    <location>
        <begin position="275"/>
        <end position="278"/>
    </location>
</feature>
<feature type="helix" evidence="8">
    <location>
        <begin position="291"/>
        <end position="298"/>
    </location>
</feature>
<feature type="helix" evidence="8">
    <location>
        <begin position="302"/>
        <end position="304"/>
    </location>
</feature>
<feature type="strand" evidence="8">
    <location>
        <begin position="312"/>
        <end position="315"/>
    </location>
</feature>
<feature type="strand" evidence="8">
    <location>
        <begin position="321"/>
        <end position="325"/>
    </location>
</feature>
<feature type="strand" evidence="8">
    <location>
        <begin position="327"/>
        <end position="329"/>
    </location>
</feature>
<feature type="helix" evidence="8">
    <location>
        <begin position="333"/>
        <end position="348"/>
    </location>
</feature>
<feature type="turn" evidence="8">
    <location>
        <begin position="349"/>
        <end position="351"/>
    </location>
</feature>
<feature type="strand" evidence="9">
    <location>
        <begin position="366"/>
        <end position="368"/>
    </location>
</feature>
<feature type="helix" evidence="8">
    <location>
        <begin position="374"/>
        <end position="392"/>
    </location>
</feature>
<feature type="strand" evidence="8">
    <location>
        <begin position="394"/>
        <end position="401"/>
    </location>
</feature>
<feature type="helix" evidence="8">
    <location>
        <begin position="406"/>
        <end position="409"/>
    </location>
</feature>
<feature type="helix" evidence="8">
    <location>
        <begin position="410"/>
        <end position="412"/>
    </location>
</feature>
<feature type="helix" evidence="8">
    <location>
        <begin position="416"/>
        <end position="432"/>
    </location>
</feature>
<feature type="strand" evidence="8">
    <location>
        <begin position="438"/>
        <end position="443"/>
    </location>
</feature>
<feature type="strand" evidence="8">
    <location>
        <begin position="452"/>
        <end position="456"/>
    </location>
</feature>
<feature type="helix" evidence="8">
    <location>
        <begin position="460"/>
        <end position="470"/>
    </location>
</feature>
<feature type="helix" evidence="8">
    <location>
        <begin position="476"/>
        <end position="498"/>
    </location>
</feature>
<feature type="turn" evidence="10">
    <location>
        <begin position="499"/>
        <end position="501"/>
    </location>
</feature>
<feature type="helix" evidence="8">
    <location>
        <begin position="504"/>
        <end position="516"/>
    </location>
</feature>
<feature type="helix" evidence="8">
    <location>
        <begin position="523"/>
        <end position="525"/>
    </location>
</feature>
<feature type="helix" evidence="8">
    <location>
        <begin position="528"/>
        <end position="532"/>
    </location>
</feature>
<feature type="turn" evidence="8">
    <location>
        <begin position="533"/>
        <end position="537"/>
    </location>
</feature>
<feature type="strand" evidence="8">
    <location>
        <begin position="540"/>
        <end position="545"/>
    </location>
</feature>
<feature type="strand" evidence="8">
    <location>
        <begin position="548"/>
        <end position="550"/>
    </location>
</feature>
<feature type="strand" evidence="8">
    <location>
        <begin position="563"/>
        <end position="570"/>
    </location>
</feature>
<feature type="strand" evidence="8">
    <location>
        <begin position="573"/>
        <end position="581"/>
    </location>
</feature>
<feature type="helix" evidence="8">
    <location>
        <begin position="589"/>
        <end position="611"/>
    </location>
</feature>